<keyword id="KW-0067">ATP-binding</keyword>
<keyword id="KW-1003">Cell membrane</keyword>
<keyword id="KW-0472">Membrane</keyword>
<keyword id="KW-0547">Nucleotide-binding</keyword>
<keyword id="KW-1185">Reference proteome</keyword>
<keyword id="KW-1278">Translocase</keyword>
<keyword id="KW-0813">Transport</keyword>
<feature type="chain" id="PRO_0000279888" description="Aliphatic sulfonates import ATP-binding protein SsuB 1">
    <location>
        <begin position="1"/>
        <end position="247"/>
    </location>
</feature>
<feature type="domain" description="ABC transporter" evidence="1">
    <location>
        <begin position="7"/>
        <end position="222"/>
    </location>
</feature>
<feature type="binding site" evidence="1">
    <location>
        <begin position="39"/>
        <end position="46"/>
    </location>
    <ligand>
        <name>ATP</name>
        <dbReference type="ChEBI" id="CHEBI:30616"/>
    </ligand>
</feature>
<organism>
    <name type="scientific">Shouchella clausii (strain KSM-K16)</name>
    <name type="common">Alkalihalobacillus clausii</name>
    <dbReference type="NCBI Taxonomy" id="66692"/>
    <lineage>
        <taxon>Bacteria</taxon>
        <taxon>Bacillati</taxon>
        <taxon>Bacillota</taxon>
        <taxon>Bacilli</taxon>
        <taxon>Bacillales</taxon>
        <taxon>Bacillaceae</taxon>
        <taxon>Shouchella</taxon>
    </lineage>
</organism>
<sequence length="247" mass="27447">MSAQMALSLSGVHKSFGTTSVLKNVEFSLTKGECIAIVGKSGCGKSTLLRLLARLEQPTAGEVYIPNGDIVRMMFQEGRLLPWKTVLQNVMLGLKHDRKRKALEAIKSVQLEGKENEWPRALSGGQKQRVALARTLVHSPHVLLLDEPLGALDALTRREMQQLIEKIWLQRGFSVVLVTHDIDEAVTLADRVYVIENGSIANTYDINLPRPRKRSSYEFVETAEEILNRVLGVNATNGHLVSLSNIK</sequence>
<dbReference type="EC" id="7.6.2.14" evidence="1"/>
<dbReference type="EMBL" id="AP006627">
    <property type="protein sequence ID" value="BAD63141.1"/>
    <property type="molecule type" value="Genomic_DNA"/>
</dbReference>
<dbReference type="RefSeq" id="WP_011245458.1">
    <property type="nucleotide sequence ID" value="NC_006582.1"/>
</dbReference>
<dbReference type="SMR" id="Q5WKG4"/>
<dbReference type="STRING" id="66692.ABC0601"/>
<dbReference type="KEGG" id="bcl:ABC0601"/>
<dbReference type="eggNOG" id="COG1116">
    <property type="taxonomic scope" value="Bacteria"/>
</dbReference>
<dbReference type="HOGENOM" id="CLU_000604_1_22_9"/>
<dbReference type="OrthoDB" id="9802264at2"/>
<dbReference type="Proteomes" id="UP000001168">
    <property type="component" value="Chromosome"/>
</dbReference>
<dbReference type="GO" id="GO:0005886">
    <property type="term" value="C:plasma membrane"/>
    <property type="evidence" value="ECO:0007669"/>
    <property type="project" value="UniProtKB-SubCell"/>
</dbReference>
<dbReference type="GO" id="GO:0005524">
    <property type="term" value="F:ATP binding"/>
    <property type="evidence" value="ECO:0007669"/>
    <property type="project" value="UniProtKB-KW"/>
</dbReference>
<dbReference type="GO" id="GO:0016887">
    <property type="term" value="F:ATP hydrolysis activity"/>
    <property type="evidence" value="ECO:0007669"/>
    <property type="project" value="InterPro"/>
</dbReference>
<dbReference type="CDD" id="cd03293">
    <property type="entry name" value="ABC_NrtD_SsuB_transporters"/>
    <property type="match status" value="1"/>
</dbReference>
<dbReference type="Gene3D" id="3.40.50.300">
    <property type="entry name" value="P-loop containing nucleotide triphosphate hydrolases"/>
    <property type="match status" value="1"/>
</dbReference>
<dbReference type="InterPro" id="IPR003593">
    <property type="entry name" value="AAA+_ATPase"/>
</dbReference>
<dbReference type="InterPro" id="IPR003439">
    <property type="entry name" value="ABC_transporter-like_ATP-bd"/>
</dbReference>
<dbReference type="InterPro" id="IPR017871">
    <property type="entry name" value="ABC_transporter-like_CS"/>
</dbReference>
<dbReference type="InterPro" id="IPR050166">
    <property type="entry name" value="ABC_transporter_ATP-bind"/>
</dbReference>
<dbReference type="InterPro" id="IPR027417">
    <property type="entry name" value="P-loop_NTPase"/>
</dbReference>
<dbReference type="PANTHER" id="PTHR42788:SF17">
    <property type="entry name" value="ALIPHATIC SULFONATES IMPORT ATP-BINDING PROTEIN SSUB"/>
    <property type="match status" value="1"/>
</dbReference>
<dbReference type="PANTHER" id="PTHR42788">
    <property type="entry name" value="TAURINE IMPORT ATP-BINDING PROTEIN-RELATED"/>
    <property type="match status" value="1"/>
</dbReference>
<dbReference type="Pfam" id="PF00005">
    <property type="entry name" value="ABC_tran"/>
    <property type="match status" value="1"/>
</dbReference>
<dbReference type="SMART" id="SM00382">
    <property type="entry name" value="AAA"/>
    <property type="match status" value="1"/>
</dbReference>
<dbReference type="SUPFAM" id="SSF52540">
    <property type="entry name" value="P-loop containing nucleoside triphosphate hydrolases"/>
    <property type="match status" value="1"/>
</dbReference>
<dbReference type="PROSITE" id="PS00211">
    <property type="entry name" value="ABC_TRANSPORTER_1"/>
    <property type="match status" value="1"/>
</dbReference>
<dbReference type="PROSITE" id="PS50893">
    <property type="entry name" value="ABC_TRANSPORTER_2"/>
    <property type="match status" value="1"/>
</dbReference>
<dbReference type="PROSITE" id="PS51291">
    <property type="entry name" value="SSUB"/>
    <property type="match status" value="1"/>
</dbReference>
<reference key="1">
    <citation type="submission" date="2003-10" db="EMBL/GenBank/DDBJ databases">
        <title>The complete genome sequence of the alkaliphilic Bacillus clausii KSM-K16.</title>
        <authorList>
            <person name="Takaki Y."/>
            <person name="Kageyama Y."/>
            <person name="Shimamura S."/>
            <person name="Suzuki H."/>
            <person name="Nishi S."/>
            <person name="Hatada Y."/>
            <person name="Kawai S."/>
            <person name="Ito S."/>
            <person name="Horikoshi K."/>
        </authorList>
    </citation>
    <scope>NUCLEOTIDE SEQUENCE [LARGE SCALE GENOMIC DNA]</scope>
    <source>
        <strain>KSM-K16</strain>
    </source>
</reference>
<comment type="function">
    <text evidence="1">Part of the ABC transporter complex SsuABC involved in aliphatic sulfonates import. Responsible for energy coupling to the transport system.</text>
</comment>
<comment type="catalytic activity">
    <reaction evidence="1">
        <text>ATP + H2O + aliphatic sulfonate-[sulfonate-binding protein]Side 1 = ADP + phosphate + aliphatic sulfonateSide 2 + [sulfonate-binding protein]Side 1.</text>
        <dbReference type="EC" id="7.6.2.14"/>
    </reaction>
</comment>
<comment type="subunit">
    <text evidence="1">The complex is composed of two ATP-binding proteins (SsuB), two transmembrane proteins (SsuC) and a solute-binding protein (SsuA).</text>
</comment>
<comment type="subcellular location">
    <subcellularLocation>
        <location evidence="1">Cell membrane</location>
        <topology evidence="1">Peripheral membrane protein</topology>
    </subcellularLocation>
</comment>
<comment type="similarity">
    <text evidence="1">Belongs to the ABC transporter superfamily. Aliphatic sulfonates importer (TC 3.A.1.17.2) family.</text>
</comment>
<accession>Q5WKG4</accession>
<gene>
    <name evidence="1" type="primary">ssuB1</name>
    <name type="ordered locus">ABC0601</name>
</gene>
<protein>
    <recommendedName>
        <fullName evidence="1">Aliphatic sulfonates import ATP-binding protein SsuB 1</fullName>
        <ecNumber evidence="1">7.6.2.14</ecNumber>
    </recommendedName>
</protein>
<name>SSUB1_SHOC1</name>
<evidence type="ECO:0000255" key="1">
    <source>
        <dbReference type="HAMAP-Rule" id="MF_01724"/>
    </source>
</evidence>
<proteinExistence type="inferred from homology"/>